<evidence type="ECO:0000255" key="1">
    <source>
        <dbReference type="HAMAP-Rule" id="MF_00013"/>
    </source>
</evidence>
<evidence type="ECO:0000255" key="2">
    <source>
        <dbReference type="PROSITE-ProRule" id="PRU01067"/>
    </source>
</evidence>
<dbReference type="EC" id="2.3.1.181" evidence="1"/>
<dbReference type="EMBL" id="CP000264">
    <property type="protein sequence ID" value="ABD54169.1"/>
    <property type="molecule type" value="Genomic_DNA"/>
</dbReference>
<dbReference type="RefSeq" id="WP_011454376.1">
    <property type="nucleotide sequence ID" value="NC_007802.1"/>
</dbReference>
<dbReference type="SMR" id="Q28SZ3"/>
<dbReference type="STRING" id="290400.Jann_1252"/>
<dbReference type="KEGG" id="jan:Jann_1252"/>
<dbReference type="eggNOG" id="COG0321">
    <property type="taxonomic scope" value="Bacteria"/>
</dbReference>
<dbReference type="HOGENOM" id="CLU_035168_3_0_5"/>
<dbReference type="OrthoDB" id="9787061at2"/>
<dbReference type="UniPathway" id="UPA00538">
    <property type="reaction ID" value="UER00592"/>
</dbReference>
<dbReference type="Proteomes" id="UP000008326">
    <property type="component" value="Chromosome"/>
</dbReference>
<dbReference type="GO" id="GO:0005737">
    <property type="term" value="C:cytoplasm"/>
    <property type="evidence" value="ECO:0007669"/>
    <property type="project" value="UniProtKB-SubCell"/>
</dbReference>
<dbReference type="GO" id="GO:0033819">
    <property type="term" value="F:lipoyl(octanoyl) transferase activity"/>
    <property type="evidence" value="ECO:0007669"/>
    <property type="project" value="UniProtKB-EC"/>
</dbReference>
<dbReference type="GO" id="GO:0036211">
    <property type="term" value="P:protein modification process"/>
    <property type="evidence" value="ECO:0007669"/>
    <property type="project" value="InterPro"/>
</dbReference>
<dbReference type="CDD" id="cd16444">
    <property type="entry name" value="LipB"/>
    <property type="match status" value="1"/>
</dbReference>
<dbReference type="Gene3D" id="3.30.930.10">
    <property type="entry name" value="Bira Bifunctional Protein, Domain 2"/>
    <property type="match status" value="1"/>
</dbReference>
<dbReference type="HAMAP" id="MF_00013">
    <property type="entry name" value="LipB"/>
    <property type="match status" value="1"/>
</dbReference>
<dbReference type="InterPro" id="IPR045864">
    <property type="entry name" value="aa-tRNA-synth_II/BPL/LPL"/>
</dbReference>
<dbReference type="InterPro" id="IPR004143">
    <property type="entry name" value="BPL_LPL_catalytic"/>
</dbReference>
<dbReference type="InterPro" id="IPR000544">
    <property type="entry name" value="Octanoyltransferase"/>
</dbReference>
<dbReference type="InterPro" id="IPR020605">
    <property type="entry name" value="Octanoyltransferase_CS"/>
</dbReference>
<dbReference type="NCBIfam" id="TIGR00214">
    <property type="entry name" value="lipB"/>
    <property type="match status" value="1"/>
</dbReference>
<dbReference type="NCBIfam" id="NF010921">
    <property type="entry name" value="PRK14341.1"/>
    <property type="match status" value="1"/>
</dbReference>
<dbReference type="NCBIfam" id="NF010925">
    <property type="entry name" value="PRK14345.1"/>
    <property type="match status" value="1"/>
</dbReference>
<dbReference type="PANTHER" id="PTHR10993:SF7">
    <property type="entry name" value="LIPOYLTRANSFERASE 2, MITOCHONDRIAL-RELATED"/>
    <property type="match status" value="1"/>
</dbReference>
<dbReference type="PANTHER" id="PTHR10993">
    <property type="entry name" value="OCTANOYLTRANSFERASE"/>
    <property type="match status" value="1"/>
</dbReference>
<dbReference type="Pfam" id="PF21948">
    <property type="entry name" value="LplA-B_cat"/>
    <property type="match status" value="1"/>
</dbReference>
<dbReference type="PIRSF" id="PIRSF016262">
    <property type="entry name" value="LPLase"/>
    <property type="match status" value="1"/>
</dbReference>
<dbReference type="SUPFAM" id="SSF55681">
    <property type="entry name" value="Class II aaRS and biotin synthetases"/>
    <property type="match status" value="1"/>
</dbReference>
<dbReference type="PROSITE" id="PS51733">
    <property type="entry name" value="BPL_LPL_CATALYTIC"/>
    <property type="match status" value="1"/>
</dbReference>
<dbReference type="PROSITE" id="PS01313">
    <property type="entry name" value="LIPB"/>
    <property type="match status" value="1"/>
</dbReference>
<gene>
    <name evidence="1" type="primary">lipB</name>
    <name type="ordered locus">Jann_1252</name>
</gene>
<protein>
    <recommendedName>
        <fullName evidence="1">Octanoyltransferase</fullName>
        <ecNumber evidence="1">2.3.1.181</ecNumber>
    </recommendedName>
    <alternativeName>
        <fullName evidence="1">Lipoate-protein ligase B</fullName>
    </alternativeName>
    <alternativeName>
        <fullName evidence="1">Lipoyl/octanoyl transferase</fullName>
    </alternativeName>
    <alternativeName>
        <fullName evidence="1">Octanoyl-[acyl-carrier-protein]-protein N-octanoyltransferase</fullName>
    </alternativeName>
</protein>
<reference key="1">
    <citation type="submission" date="2006-02" db="EMBL/GenBank/DDBJ databases">
        <title>Complete sequence of chromosome of Jannaschia sp. CCS1.</title>
        <authorList>
            <consortium name="US DOE Joint Genome Institute"/>
            <person name="Copeland A."/>
            <person name="Lucas S."/>
            <person name="Lapidus A."/>
            <person name="Barry K."/>
            <person name="Detter J.C."/>
            <person name="Glavina del Rio T."/>
            <person name="Hammon N."/>
            <person name="Israni S."/>
            <person name="Pitluck S."/>
            <person name="Brettin T."/>
            <person name="Bruce D."/>
            <person name="Han C."/>
            <person name="Tapia R."/>
            <person name="Gilna P."/>
            <person name="Chertkov O."/>
            <person name="Saunders E."/>
            <person name="Schmutz J."/>
            <person name="Larimer F."/>
            <person name="Land M."/>
            <person name="Kyrpides N."/>
            <person name="Lykidis A."/>
            <person name="Moran M.A."/>
            <person name="Belas R."/>
            <person name="Ye W."/>
            <person name="Buchan A."/>
            <person name="Gonzalez J.M."/>
            <person name="Schell M.A."/>
            <person name="Richardson P."/>
        </authorList>
    </citation>
    <scope>NUCLEOTIDE SEQUENCE [LARGE SCALE GENOMIC DNA]</scope>
    <source>
        <strain>CCS1</strain>
    </source>
</reference>
<name>LIPB_JANSC</name>
<keyword id="KW-0012">Acyltransferase</keyword>
<keyword id="KW-0963">Cytoplasm</keyword>
<keyword id="KW-1185">Reference proteome</keyword>
<keyword id="KW-0808">Transferase</keyword>
<accession>Q28SZ3</accession>
<sequence>MVEWITSDAPVPYPLAVAEMEARANAIAKGEAGEAVWLLEHPPLYTAGTSARESDLRDPDRFPVFETRRGGQYTYHGPGQRVAYVMLDLNTRGKDVRAFVQRLEAWVIAALDDFNVTGAVREGRVGVWVDRPEKAPLPDGTPREDKIAAIGVRLRKWVSFHGLSINVEPDLSHFDGIVPCGIEGHGVTSLVDLGLPVTMADLDVALKRQFFEVFGA</sequence>
<organism>
    <name type="scientific">Jannaschia sp. (strain CCS1)</name>
    <dbReference type="NCBI Taxonomy" id="290400"/>
    <lineage>
        <taxon>Bacteria</taxon>
        <taxon>Pseudomonadati</taxon>
        <taxon>Pseudomonadota</taxon>
        <taxon>Alphaproteobacteria</taxon>
        <taxon>Rhodobacterales</taxon>
        <taxon>Roseobacteraceae</taxon>
        <taxon>Jannaschia</taxon>
    </lineage>
</organism>
<feature type="chain" id="PRO_0000242729" description="Octanoyltransferase">
    <location>
        <begin position="1"/>
        <end position="216"/>
    </location>
</feature>
<feature type="domain" description="BPL/LPL catalytic" evidence="2">
    <location>
        <begin position="30"/>
        <end position="216"/>
    </location>
</feature>
<feature type="active site" description="Acyl-thioester intermediate" evidence="1">
    <location>
        <position position="180"/>
    </location>
</feature>
<feature type="binding site" evidence="1">
    <location>
        <begin position="69"/>
        <end position="76"/>
    </location>
    <ligand>
        <name>substrate</name>
    </ligand>
</feature>
<feature type="binding site" evidence="1">
    <location>
        <begin position="149"/>
        <end position="151"/>
    </location>
    <ligand>
        <name>substrate</name>
    </ligand>
</feature>
<feature type="binding site" evidence="1">
    <location>
        <begin position="162"/>
        <end position="164"/>
    </location>
    <ligand>
        <name>substrate</name>
    </ligand>
</feature>
<feature type="site" description="Lowers pKa of active site Cys" evidence="1">
    <location>
        <position position="146"/>
    </location>
</feature>
<comment type="function">
    <text evidence="1">Catalyzes the transfer of endogenously produced octanoic acid from octanoyl-acyl-carrier-protein onto the lipoyl domains of lipoate-dependent enzymes. Lipoyl-ACP can also act as a substrate although octanoyl-ACP is likely to be the physiological substrate.</text>
</comment>
<comment type="catalytic activity">
    <reaction evidence="1">
        <text>octanoyl-[ACP] + L-lysyl-[protein] = N(6)-octanoyl-L-lysyl-[protein] + holo-[ACP] + H(+)</text>
        <dbReference type="Rhea" id="RHEA:17665"/>
        <dbReference type="Rhea" id="RHEA-COMP:9636"/>
        <dbReference type="Rhea" id="RHEA-COMP:9685"/>
        <dbReference type="Rhea" id="RHEA-COMP:9752"/>
        <dbReference type="Rhea" id="RHEA-COMP:9928"/>
        <dbReference type="ChEBI" id="CHEBI:15378"/>
        <dbReference type="ChEBI" id="CHEBI:29969"/>
        <dbReference type="ChEBI" id="CHEBI:64479"/>
        <dbReference type="ChEBI" id="CHEBI:78463"/>
        <dbReference type="ChEBI" id="CHEBI:78809"/>
        <dbReference type="EC" id="2.3.1.181"/>
    </reaction>
</comment>
<comment type="pathway">
    <text evidence="1">Protein modification; protein lipoylation via endogenous pathway; protein N(6)-(lipoyl)lysine from octanoyl-[acyl-carrier-protein]: step 1/2.</text>
</comment>
<comment type="subcellular location">
    <subcellularLocation>
        <location evidence="1">Cytoplasm</location>
    </subcellularLocation>
</comment>
<comment type="miscellaneous">
    <text evidence="1">In the reaction, the free carboxyl group of octanoic acid is attached via an amide linkage to the epsilon-amino group of a specific lysine residue of lipoyl domains of lipoate-dependent enzymes.</text>
</comment>
<comment type="similarity">
    <text evidence="1">Belongs to the LipB family.</text>
</comment>
<proteinExistence type="inferred from homology"/>